<sequence>MRFVFLGPPGAGKGTLAGEISGRCGVVHISTGGILRAAIQKQTALGKKVQKVVEVGGLVDDQTVTELVRERVSHEDVVSGFILDGFPRTVTQARCLEDIVPIDYAVSIVVPDDVLVARLTGRRVCSACGSSYHVLFAQPKREGVCDRCRGVLVVREDDKMSAILQRLTAYRAQAEPIVHFYSERGKLVSLNGAPPISDVVLEFQERFAQSR</sequence>
<dbReference type="EC" id="2.7.4.3" evidence="1"/>
<dbReference type="EMBL" id="CP000805">
    <property type="protein sequence ID" value="ACD71015.1"/>
    <property type="molecule type" value="Genomic_DNA"/>
</dbReference>
<dbReference type="RefSeq" id="WP_010882041.1">
    <property type="nucleotide sequence ID" value="NC_021508.1"/>
</dbReference>
<dbReference type="SMR" id="B2S3I6"/>
<dbReference type="KEGG" id="tpp:TPASS_0595"/>
<dbReference type="PATRIC" id="fig|455434.6.peg.591"/>
<dbReference type="UniPathway" id="UPA00588">
    <property type="reaction ID" value="UER00649"/>
</dbReference>
<dbReference type="Proteomes" id="UP000001202">
    <property type="component" value="Chromosome"/>
</dbReference>
<dbReference type="GO" id="GO:0005737">
    <property type="term" value="C:cytoplasm"/>
    <property type="evidence" value="ECO:0007669"/>
    <property type="project" value="UniProtKB-SubCell"/>
</dbReference>
<dbReference type="GO" id="GO:0004017">
    <property type="term" value="F:adenylate kinase activity"/>
    <property type="evidence" value="ECO:0007669"/>
    <property type="project" value="UniProtKB-UniRule"/>
</dbReference>
<dbReference type="GO" id="GO:0005524">
    <property type="term" value="F:ATP binding"/>
    <property type="evidence" value="ECO:0007669"/>
    <property type="project" value="UniProtKB-UniRule"/>
</dbReference>
<dbReference type="GO" id="GO:0008270">
    <property type="term" value="F:zinc ion binding"/>
    <property type="evidence" value="ECO:0007669"/>
    <property type="project" value="UniProtKB-UniRule"/>
</dbReference>
<dbReference type="GO" id="GO:0044209">
    <property type="term" value="P:AMP salvage"/>
    <property type="evidence" value="ECO:0007669"/>
    <property type="project" value="UniProtKB-UniRule"/>
</dbReference>
<dbReference type="CDD" id="cd01428">
    <property type="entry name" value="ADK"/>
    <property type="match status" value="1"/>
</dbReference>
<dbReference type="FunFam" id="3.40.50.300:FF:000106">
    <property type="entry name" value="Adenylate kinase mitochondrial"/>
    <property type="match status" value="1"/>
</dbReference>
<dbReference type="Gene3D" id="3.40.50.300">
    <property type="entry name" value="P-loop containing nucleotide triphosphate hydrolases"/>
    <property type="match status" value="1"/>
</dbReference>
<dbReference type="HAMAP" id="MF_00235">
    <property type="entry name" value="Adenylate_kinase_Adk"/>
    <property type="match status" value="1"/>
</dbReference>
<dbReference type="InterPro" id="IPR006259">
    <property type="entry name" value="Adenyl_kin_sub"/>
</dbReference>
<dbReference type="InterPro" id="IPR000850">
    <property type="entry name" value="Adenylat/UMP-CMP_kin"/>
</dbReference>
<dbReference type="InterPro" id="IPR033690">
    <property type="entry name" value="Adenylat_kinase_CS"/>
</dbReference>
<dbReference type="InterPro" id="IPR007862">
    <property type="entry name" value="Adenylate_kinase_lid-dom"/>
</dbReference>
<dbReference type="InterPro" id="IPR027417">
    <property type="entry name" value="P-loop_NTPase"/>
</dbReference>
<dbReference type="NCBIfam" id="TIGR01351">
    <property type="entry name" value="adk"/>
    <property type="match status" value="1"/>
</dbReference>
<dbReference type="PANTHER" id="PTHR23359">
    <property type="entry name" value="NUCLEOTIDE KINASE"/>
    <property type="match status" value="1"/>
</dbReference>
<dbReference type="Pfam" id="PF00406">
    <property type="entry name" value="ADK"/>
    <property type="match status" value="1"/>
</dbReference>
<dbReference type="Pfam" id="PF05191">
    <property type="entry name" value="ADK_lid"/>
    <property type="match status" value="1"/>
</dbReference>
<dbReference type="PRINTS" id="PR00094">
    <property type="entry name" value="ADENYLTKNASE"/>
</dbReference>
<dbReference type="SUPFAM" id="SSF52540">
    <property type="entry name" value="P-loop containing nucleoside triphosphate hydrolases"/>
    <property type="match status" value="1"/>
</dbReference>
<dbReference type="PROSITE" id="PS00113">
    <property type="entry name" value="ADENYLATE_KINASE"/>
    <property type="match status" value="1"/>
</dbReference>
<gene>
    <name evidence="1" type="primary">adk</name>
    <name type="ordered locus">TPASS_0595</name>
</gene>
<proteinExistence type="inferred from homology"/>
<feature type="chain" id="PRO_1000100622" description="Adenylate kinase">
    <location>
        <begin position="1"/>
        <end position="211"/>
    </location>
</feature>
<feature type="region of interest" description="NMP" evidence="1">
    <location>
        <begin position="30"/>
        <end position="59"/>
    </location>
</feature>
<feature type="region of interest" description="LID" evidence="1">
    <location>
        <begin position="121"/>
        <end position="158"/>
    </location>
</feature>
<feature type="binding site" evidence="1">
    <location>
        <begin position="10"/>
        <end position="15"/>
    </location>
    <ligand>
        <name>ATP</name>
        <dbReference type="ChEBI" id="CHEBI:30616"/>
    </ligand>
</feature>
<feature type="binding site" evidence="1">
    <location>
        <position position="31"/>
    </location>
    <ligand>
        <name>AMP</name>
        <dbReference type="ChEBI" id="CHEBI:456215"/>
    </ligand>
</feature>
<feature type="binding site" evidence="1">
    <location>
        <position position="36"/>
    </location>
    <ligand>
        <name>AMP</name>
        <dbReference type="ChEBI" id="CHEBI:456215"/>
    </ligand>
</feature>
<feature type="binding site" evidence="1">
    <location>
        <begin position="57"/>
        <end position="59"/>
    </location>
    <ligand>
        <name>AMP</name>
        <dbReference type="ChEBI" id="CHEBI:456215"/>
    </ligand>
</feature>
<feature type="binding site" evidence="1">
    <location>
        <begin position="85"/>
        <end position="88"/>
    </location>
    <ligand>
        <name>AMP</name>
        <dbReference type="ChEBI" id="CHEBI:456215"/>
    </ligand>
</feature>
<feature type="binding site" evidence="1">
    <location>
        <position position="92"/>
    </location>
    <ligand>
        <name>AMP</name>
        <dbReference type="ChEBI" id="CHEBI:456215"/>
    </ligand>
</feature>
<feature type="binding site" evidence="1">
    <location>
        <position position="122"/>
    </location>
    <ligand>
        <name>ATP</name>
        <dbReference type="ChEBI" id="CHEBI:30616"/>
    </ligand>
</feature>
<feature type="binding site" evidence="1">
    <location>
        <position position="125"/>
    </location>
    <ligand>
        <name>Zn(2+)</name>
        <dbReference type="ChEBI" id="CHEBI:29105"/>
        <note>structural</note>
    </ligand>
</feature>
<feature type="binding site" evidence="1">
    <location>
        <position position="128"/>
    </location>
    <ligand>
        <name>Zn(2+)</name>
        <dbReference type="ChEBI" id="CHEBI:29105"/>
        <note>structural</note>
    </ligand>
</feature>
<feature type="binding site" evidence="1">
    <location>
        <begin position="131"/>
        <end position="132"/>
    </location>
    <ligand>
        <name>ATP</name>
        <dbReference type="ChEBI" id="CHEBI:30616"/>
    </ligand>
</feature>
<feature type="binding site" evidence="1">
    <location>
        <position position="145"/>
    </location>
    <ligand>
        <name>Zn(2+)</name>
        <dbReference type="ChEBI" id="CHEBI:29105"/>
        <note>structural</note>
    </ligand>
</feature>
<feature type="binding site" evidence="1">
    <location>
        <position position="148"/>
    </location>
    <ligand>
        <name>Zn(2+)</name>
        <dbReference type="ChEBI" id="CHEBI:29105"/>
        <note>structural</note>
    </ligand>
</feature>
<feature type="binding site" evidence="1">
    <location>
        <position position="155"/>
    </location>
    <ligand>
        <name>AMP</name>
        <dbReference type="ChEBI" id="CHEBI:456215"/>
    </ligand>
</feature>
<feature type="binding site" evidence="1">
    <location>
        <position position="166"/>
    </location>
    <ligand>
        <name>AMP</name>
        <dbReference type="ChEBI" id="CHEBI:456215"/>
    </ligand>
</feature>
<feature type="binding site" evidence="1">
    <location>
        <position position="194"/>
    </location>
    <ligand>
        <name>ATP</name>
        <dbReference type="ChEBI" id="CHEBI:30616"/>
    </ligand>
</feature>
<comment type="function">
    <text evidence="1">Catalyzes the reversible transfer of the terminal phosphate group between ATP and AMP. Plays an important role in cellular energy homeostasis and in adenine nucleotide metabolism.</text>
</comment>
<comment type="catalytic activity">
    <reaction evidence="1">
        <text>AMP + ATP = 2 ADP</text>
        <dbReference type="Rhea" id="RHEA:12973"/>
        <dbReference type="ChEBI" id="CHEBI:30616"/>
        <dbReference type="ChEBI" id="CHEBI:456215"/>
        <dbReference type="ChEBI" id="CHEBI:456216"/>
        <dbReference type="EC" id="2.7.4.3"/>
    </reaction>
</comment>
<comment type="pathway">
    <text evidence="1">Purine metabolism; AMP biosynthesis via salvage pathway; AMP from ADP: step 1/1.</text>
</comment>
<comment type="subunit">
    <text evidence="1">Monomer.</text>
</comment>
<comment type="subcellular location">
    <subcellularLocation>
        <location evidence="1">Cytoplasm</location>
    </subcellularLocation>
</comment>
<comment type="domain">
    <text evidence="1">Consists of three domains, a large central CORE domain and two small peripheral domains, NMPbind and LID, which undergo movements during catalysis. The LID domain closes over the site of phosphoryl transfer upon ATP binding. Assembling and dissambling the active center during each catalytic cycle provides an effective means to prevent ATP hydrolysis. Some bacteria have evolved a zinc-coordinating structure that stabilizes the LID domain.</text>
</comment>
<comment type="similarity">
    <text evidence="1">Belongs to the adenylate kinase family.</text>
</comment>
<name>KAD_TREPS</name>
<evidence type="ECO:0000255" key="1">
    <source>
        <dbReference type="HAMAP-Rule" id="MF_00235"/>
    </source>
</evidence>
<organism>
    <name type="scientific">Treponema pallidum subsp. pallidum (strain SS14)</name>
    <dbReference type="NCBI Taxonomy" id="455434"/>
    <lineage>
        <taxon>Bacteria</taxon>
        <taxon>Pseudomonadati</taxon>
        <taxon>Spirochaetota</taxon>
        <taxon>Spirochaetia</taxon>
        <taxon>Spirochaetales</taxon>
        <taxon>Treponemataceae</taxon>
        <taxon>Treponema</taxon>
    </lineage>
</organism>
<keyword id="KW-0067">ATP-binding</keyword>
<keyword id="KW-0963">Cytoplasm</keyword>
<keyword id="KW-0418">Kinase</keyword>
<keyword id="KW-0479">Metal-binding</keyword>
<keyword id="KW-0545">Nucleotide biosynthesis</keyword>
<keyword id="KW-0547">Nucleotide-binding</keyword>
<keyword id="KW-0808">Transferase</keyword>
<keyword id="KW-0862">Zinc</keyword>
<accession>B2S3I6</accession>
<reference key="1">
    <citation type="journal article" date="2008" name="BMC Microbiol.">
        <title>Complete genome sequence of Treponema pallidum ssp. pallidum strain SS14 determined with oligonucleotide arrays.</title>
        <authorList>
            <person name="Matejkova P."/>
            <person name="Strouhal M."/>
            <person name="Smajs D."/>
            <person name="Norris S.J."/>
            <person name="Palzkill T."/>
            <person name="Petrosino J.F."/>
            <person name="Sodergren E."/>
            <person name="Norton J.E."/>
            <person name="Singh J."/>
            <person name="Richmond T.A."/>
            <person name="Molla M.N."/>
            <person name="Albert T.J."/>
            <person name="Weinstock G.M."/>
        </authorList>
    </citation>
    <scope>NUCLEOTIDE SEQUENCE [LARGE SCALE GENOMIC DNA]</scope>
    <source>
        <strain>SS14</strain>
    </source>
</reference>
<protein>
    <recommendedName>
        <fullName evidence="1">Adenylate kinase</fullName>
        <shortName evidence="1">AK</shortName>
        <ecNumber evidence="1">2.7.4.3</ecNumber>
    </recommendedName>
    <alternativeName>
        <fullName evidence="1">ATP-AMP transphosphorylase</fullName>
    </alternativeName>
    <alternativeName>
        <fullName evidence="1">ATP:AMP phosphotransferase</fullName>
    </alternativeName>
    <alternativeName>
        <fullName evidence="1">Adenylate monophosphate kinase</fullName>
    </alternativeName>
</protein>